<comment type="function">
    <text evidence="1">Catalyzes the initial step of the lipid cycle reactions in the biosynthesis of the cell wall peptidoglycan: transfers peptidoglycan precursor phospho-MurNAc-pentapeptide from UDP-MurNAc-pentapeptide onto the lipid carrier undecaprenyl phosphate, yielding undecaprenyl-pyrophosphoryl-MurNAc-pentapeptide, known as lipid I.</text>
</comment>
<comment type="catalytic activity">
    <reaction evidence="1">
        <text>UDP-N-acetyl-alpha-D-muramoyl-L-alanyl-gamma-D-glutamyl-meso-2,6-diaminopimeloyl-D-alanyl-D-alanine + di-trans,octa-cis-undecaprenyl phosphate = di-trans,octa-cis-undecaprenyl diphospho-N-acetyl-alpha-D-muramoyl-L-alanyl-D-glutamyl-meso-2,6-diaminopimeloyl-D-alanyl-D-alanine + UMP</text>
        <dbReference type="Rhea" id="RHEA:28386"/>
        <dbReference type="ChEBI" id="CHEBI:57865"/>
        <dbReference type="ChEBI" id="CHEBI:60392"/>
        <dbReference type="ChEBI" id="CHEBI:61386"/>
        <dbReference type="ChEBI" id="CHEBI:61387"/>
        <dbReference type="EC" id="2.7.8.13"/>
    </reaction>
</comment>
<comment type="cofactor">
    <cofactor evidence="1">
        <name>Mg(2+)</name>
        <dbReference type="ChEBI" id="CHEBI:18420"/>
    </cofactor>
</comment>
<comment type="pathway">
    <text evidence="1">Cell wall biogenesis; peptidoglycan biosynthesis.</text>
</comment>
<comment type="subcellular location">
    <subcellularLocation>
        <location evidence="1">Cell inner membrane</location>
        <topology evidence="1">Multi-pass membrane protein</topology>
    </subcellularLocation>
</comment>
<comment type="similarity">
    <text evidence="1">Belongs to the glycosyltransferase 4 family. MraY subfamily.</text>
</comment>
<organism>
    <name type="scientific">Vibrio cholerae serotype O1 (strain M66-2)</name>
    <dbReference type="NCBI Taxonomy" id="579112"/>
    <lineage>
        <taxon>Bacteria</taxon>
        <taxon>Pseudomonadati</taxon>
        <taxon>Pseudomonadota</taxon>
        <taxon>Gammaproteobacteria</taxon>
        <taxon>Vibrionales</taxon>
        <taxon>Vibrionaceae</taxon>
        <taxon>Vibrio</taxon>
    </lineage>
</organism>
<name>MRAY_VIBCM</name>
<keyword id="KW-0131">Cell cycle</keyword>
<keyword id="KW-0132">Cell division</keyword>
<keyword id="KW-0997">Cell inner membrane</keyword>
<keyword id="KW-1003">Cell membrane</keyword>
<keyword id="KW-0133">Cell shape</keyword>
<keyword id="KW-0961">Cell wall biogenesis/degradation</keyword>
<keyword id="KW-0460">Magnesium</keyword>
<keyword id="KW-0472">Membrane</keyword>
<keyword id="KW-0479">Metal-binding</keyword>
<keyword id="KW-0573">Peptidoglycan synthesis</keyword>
<keyword id="KW-0808">Transferase</keyword>
<keyword id="KW-0812">Transmembrane</keyword>
<keyword id="KW-1133">Transmembrane helix</keyword>
<reference key="1">
    <citation type="journal article" date="2008" name="PLoS ONE">
        <title>A recalibrated molecular clock and independent origins for the cholera pandemic clones.</title>
        <authorList>
            <person name="Feng L."/>
            <person name="Reeves P.R."/>
            <person name="Lan R."/>
            <person name="Ren Y."/>
            <person name="Gao C."/>
            <person name="Zhou Z."/>
            <person name="Ren Y."/>
            <person name="Cheng J."/>
            <person name="Wang W."/>
            <person name="Wang J."/>
            <person name="Qian W."/>
            <person name="Li D."/>
            <person name="Wang L."/>
        </authorList>
    </citation>
    <scope>NUCLEOTIDE SEQUENCE [LARGE SCALE GENOMIC DNA]</scope>
    <source>
        <strain>M66-2</strain>
    </source>
</reference>
<sequence>MIIWLAELLQPYFSFFRLFEYLSFRAIVSILTALGISLWMGPRMIKRLQMLQIGQVVRNEGPESHFSKRGTPTMGGVMILAAITITVLLWADLTNPYVWAVLAVLLGYGAVGFVDDYRKVVRKNTDGLIARWKYFWQSAIALVVAFALYAHGQDTAATQLVVPFFKDVMPQLGLMYIVLTYFVIVGTSNAVNLTDGLDGLAIMPTVLVAAGFAAIAWATGNVNFANYLHIPYIPHSSELVVVCTAMVGAGLGFLWFNTYPAQVFMGDVGALALGGALGTIAVLVRQEFVLVIMGGVFVMETLSVILQVGSYKLRGQRIFRMAPIHHHYELKGWPEPRVIVRFWIISIVLVLIGLATLKVR</sequence>
<proteinExistence type="inferred from homology"/>
<evidence type="ECO:0000255" key="1">
    <source>
        <dbReference type="HAMAP-Rule" id="MF_00038"/>
    </source>
</evidence>
<feature type="chain" id="PRO_1000117205" description="Phospho-N-acetylmuramoyl-pentapeptide-transferase">
    <location>
        <begin position="1"/>
        <end position="360"/>
    </location>
</feature>
<feature type="transmembrane region" description="Helical" evidence="1">
    <location>
        <begin position="21"/>
        <end position="41"/>
    </location>
</feature>
<feature type="transmembrane region" description="Helical" evidence="1">
    <location>
        <begin position="73"/>
        <end position="93"/>
    </location>
</feature>
<feature type="transmembrane region" description="Helical" evidence="1">
    <location>
        <begin position="94"/>
        <end position="114"/>
    </location>
</feature>
<feature type="transmembrane region" description="Helical" evidence="1">
    <location>
        <begin position="132"/>
        <end position="152"/>
    </location>
</feature>
<feature type="transmembrane region" description="Helical" evidence="1">
    <location>
        <begin position="168"/>
        <end position="188"/>
    </location>
</feature>
<feature type="transmembrane region" description="Helical" evidence="1">
    <location>
        <begin position="199"/>
        <end position="219"/>
    </location>
</feature>
<feature type="transmembrane region" description="Helical" evidence="1">
    <location>
        <begin position="239"/>
        <end position="259"/>
    </location>
</feature>
<feature type="transmembrane region" description="Helical" evidence="1">
    <location>
        <begin position="263"/>
        <end position="283"/>
    </location>
</feature>
<feature type="transmembrane region" description="Helical" evidence="1">
    <location>
        <begin position="288"/>
        <end position="308"/>
    </location>
</feature>
<feature type="transmembrane region" description="Helical" evidence="1">
    <location>
        <begin position="338"/>
        <end position="358"/>
    </location>
</feature>
<dbReference type="EC" id="2.7.8.13" evidence="1"/>
<dbReference type="EMBL" id="CP001233">
    <property type="protein sequence ID" value="ACP06627.1"/>
    <property type="molecule type" value="Genomic_DNA"/>
</dbReference>
<dbReference type="RefSeq" id="WP_000587839.1">
    <property type="nucleotide sequence ID" value="NC_012578.1"/>
</dbReference>
<dbReference type="SMR" id="C3LQU9"/>
<dbReference type="GeneID" id="88783215"/>
<dbReference type="KEGG" id="vcm:VCM66_2327"/>
<dbReference type="HOGENOM" id="CLU_023982_0_0_6"/>
<dbReference type="UniPathway" id="UPA00219"/>
<dbReference type="Proteomes" id="UP000001217">
    <property type="component" value="Chromosome I"/>
</dbReference>
<dbReference type="GO" id="GO:0005886">
    <property type="term" value="C:plasma membrane"/>
    <property type="evidence" value="ECO:0007669"/>
    <property type="project" value="UniProtKB-SubCell"/>
</dbReference>
<dbReference type="GO" id="GO:0046872">
    <property type="term" value="F:metal ion binding"/>
    <property type="evidence" value="ECO:0007669"/>
    <property type="project" value="UniProtKB-KW"/>
</dbReference>
<dbReference type="GO" id="GO:0008963">
    <property type="term" value="F:phospho-N-acetylmuramoyl-pentapeptide-transferase activity"/>
    <property type="evidence" value="ECO:0007669"/>
    <property type="project" value="UniProtKB-UniRule"/>
</dbReference>
<dbReference type="GO" id="GO:0051992">
    <property type="term" value="F:UDP-N-acetylmuramoyl-L-alanyl-D-glutamyl-meso-2,6-diaminopimelyl-D-alanyl-D-alanine:undecaprenyl-phosphate transferase activity"/>
    <property type="evidence" value="ECO:0007669"/>
    <property type="project" value="RHEA"/>
</dbReference>
<dbReference type="GO" id="GO:0051301">
    <property type="term" value="P:cell division"/>
    <property type="evidence" value="ECO:0007669"/>
    <property type="project" value="UniProtKB-KW"/>
</dbReference>
<dbReference type="GO" id="GO:0071555">
    <property type="term" value="P:cell wall organization"/>
    <property type="evidence" value="ECO:0007669"/>
    <property type="project" value="UniProtKB-KW"/>
</dbReference>
<dbReference type="GO" id="GO:0009252">
    <property type="term" value="P:peptidoglycan biosynthetic process"/>
    <property type="evidence" value="ECO:0007669"/>
    <property type="project" value="UniProtKB-UniRule"/>
</dbReference>
<dbReference type="GO" id="GO:0008360">
    <property type="term" value="P:regulation of cell shape"/>
    <property type="evidence" value="ECO:0007669"/>
    <property type="project" value="UniProtKB-KW"/>
</dbReference>
<dbReference type="CDD" id="cd06852">
    <property type="entry name" value="GT_MraY"/>
    <property type="match status" value="1"/>
</dbReference>
<dbReference type="HAMAP" id="MF_00038">
    <property type="entry name" value="MraY"/>
    <property type="match status" value="1"/>
</dbReference>
<dbReference type="InterPro" id="IPR000715">
    <property type="entry name" value="Glycosyl_transferase_4"/>
</dbReference>
<dbReference type="InterPro" id="IPR003524">
    <property type="entry name" value="PNAcMuramoyl-5peptid_Trfase"/>
</dbReference>
<dbReference type="InterPro" id="IPR018480">
    <property type="entry name" value="PNAcMuramoyl-5peptid_Trfase_CS"/>
</dbReference>
<dbReference type="NCBIfam" id="TIGR00445">
    <property type="entry name" value="mraY"/>
    <property type="match status" value="1"/>
</dbReference>
<dbReference type="PANTHER" id="PTHR22926">
    <property type="entry name" value="PHOSPHO-N-ACETYLMURAMOYL-PENTAPEPTIDE-TRANSFERASE"/>
    <property type="match status" value="1"/>
</dbReference>
<dbReference type="PANTHER" id="PTHR22926:SF5">
    <property type="entry name" value="PHOSPHO-N-ACETYLMURAMOYL-PENTAPEPTIDE-TRANSFERASE HOMOLOG"/>
    <property type="match status" value="1"/>
</dbReference>
<dbReference type="Pfam" id="PF00953">
    <property type="entry name" value="Glycos_transf_4"/>
    <property type="match status" value="1"/>
</dbReference>
<dbReference type="Pfam" id="PF10555">
    <property type="entry name" value="MraY_sig1"/>
    <property type="match status" value="1"/>
</dbReference>
<dbReference type="PROSITE" id="PS01347">
    <property type="entry name" value="MRAY_1"/>
    <property type="match status" value="1"/>
</dbReference>
<dbReference type="PROSITE" id="PS01348">
    <property type="entry name" value="MRAY_2"/>
    <property type="match status" value="1"/>
</dbReference>
<gene>
    <name evidence="1" type="primary">mraY</name>
    <name type="ordered locus">VCM66_2327</name>
</gene>
<protein>
    <recommendedName>
        <fullName evidence="1">Phospho-N-acetylmuramoyl-pentapeptide-transferase</fullName>
        <ecNumber evidence="1">2.7.8.13</ecNumber>
    </recommendedName>
    <alternativeName>
        <fullName evidence="1">UDP-MurNAc-pentapeptide phosphotransferase</fullName>
    </alternativeName>
</protein>
<accession>C3LQU9</accession>